<sequence>MAEPTSDFETPIGWHASPELTPTLGPLSDTAPPRDSWMFWAMLPPPPPPLTSSLPAAGSKPSSESQPPMEAQSLPGAPPPFDAQILPGAQPPFDAQSPLDSQPQPSGQPWNFHASTSWYWRQSSDRFPRHQKSFNPAVKNSYYPRKYDAKFTDFSLPPSRKQKKKKRKEPVFHFFCDTCDRGFKNQEKYDKHMSEHTKCPELDCSFTAHEKIVQFHWRNMHAPGMKKIKLDTPEEIARWREERRKNYPTLANIERKKKLKLEKEKRGAVLTTTQYGKMKGMSRHSQMAKIRSPGKNHKWKNDNSRQRAVTGSGSHLCDLKLEGPPEANADPLGVLINSDSESDKEEKPQHSVIPKEVTPALCSLMSSYGSLSGSESEPEETPIKTEADVLAENQVLDSSAPKSPSQDVKATVRNFSEAKSENRKKSFEKTNPKRKKDYHNYQTLFEPRTHHPYLLEMLLAPDIRHERNVILQCVRYIIKKDFFGLDTNSAKSKDV</sequence>
<organism>
    <name type="scientific">Homo sapiens</name>
    <name type="common">Human</name>
    <dbReference type="NCBI Taxonomy" id="9606"/>
    <lineage>
        <taxon>Eukaryota</taxon>
        <taxon>Metazoa</taxon>
        <taxon>Chordata</taxon>
        <taxon>Craniata</taxon>
        <taxon>Vertebrata</taxon>
        <taxon>Euteleostomi</taxon>
        <taxon>Mammalia</taxon>
        <taxon>Eutheria</taxon>
        <taxon>Euarchontoglires</taxon>
        <taxon>Primates</taxon>
        <taxon>Haplorrhini</taxon>
        <taxon>Catarrhini</taxon>
        <taxon>Hominidae</taxon>
        <taxon>Homo</taxon>
    </lineage>
</organism>
<dbReference type="EMBL" id="AF159548">
    <property type="protein sequence ID" value="AAF15315.1"/>
    <property type="molecule type" value="mRNA"/>
</dbReference>
<dbReference type="EMBL" id="AL354816">
    <property type="status" value="NOT_ANNOTATED_CDS"/>
    <property type="molecule type" value="Genomic_DNA"/>
</dbReference>
<dbReference type="EMBL" id="AL359706">
    <property type="status" value="NOT_ANNOTATED_CDS"/>
    <property type="molecule type" value="Genomic_DNA"/>
</dbReference>
<dbReference type="EMBL" id="BC017745">
    <property type="protein sequence ID" value="AAH17745.1"/>
    <property type="status" value="ALT_INIT"/>
    <property type="molecule type" value="mRNA"/>
</dbReference>
<dbReference type="CCDS" id="CCDS9393.1"/>
<dbReference type="RefSeq" id="NP_036477.2">
    <property type="nucleotide sequence ID" value="NM_012345.3"/>
</dbReference>
<dbReference type="PDB" id="5L85">
    <property type="method" value="NMR"/>
    <property type="chains" value="B=462-495"/>
</dbReference>
<dbReference type="PDBsum" id="5L85"/>
<dbReference type="SMR" id="Q9UHK0"/>
<dbReference type="BioGRID" id="117807">
    <property type="interactions" value="143"/>
</dbReference>
<dbReference type="CORUM" id="Q9UHK0"/>
<dbReference type="DIP" id="DIP-41010N"/>
<dbReference type="FunCoup" id="Q9UHK0">
    <property type="interactions" value="2712"/>
</dbReference>
<dbReference type="IntAct" id="Q9UHK0">
    <property type="interactions" value="122"/>
</dbReference>
<dbReference type="MINT" id="Q9UHK0"/>
<dbReference type="STRING" id="9606.ENSP00000368459"/>
<dbReference type="GlyGen" id="Q9UHK0">
    <property type="glycosylation" value="1 site, 1 O-linked glycan (1 site)"/>
</dbReference>
<dbReference type="iPTMnet" id="Q9UHK0"/>
<dbReference type="PhosphoSitePlus" id="Q9UHK0"/>
<dbReference type="BioMuta" id="NUFIP1"/>
<dbReference type="DMDM" id="134047852"/>
<dbReference type="jPOST" id="Q9UHK0"/>
<dbReference type="MassIVE" id="Q9UHK0"/>
<dbReference type="PaxDb" id="9606-ENSP00000368459"/>
<dbReference type="PeptideAtlas" id="Q9UHK0"/>
<dbReference type="ProteomicsDB" id="84368"/>
<dbReference type="Pumba" id="Q9UHK0"/>
<dbReference type="Antibodypedia" id="23576">
    <property type="antibodies" value="96 antibodies from 28 providers"/>
</dbReference>
<dbReference type="DNASU" id="26747"/>
<dbReference type="Ensembl" id="ENST00000379161.5">
    <property type="protein sequence ID" value="ENSP00000368459.4"/>
    <property type="gene ID" value="ENSG00000083635.8"/>
</dbReference>
<dbReference type="GeneID" id="26747"/>
<dbReference type="KEGG" id="hsa:26747"/>
<dbReference type="MANE-Select" id="ENST00000379161.5">
    <property type="protein sequence ID" value="ENSP00000368459.4"/>
    <property type="RefSeq nucleotide sequence ID" value="NM_012345.3"/>
    <property type="RefSeq protein sequence ID" value="NP_036477.2"/>
</dbReference>
<dbReference type="UCSC" id="uc001uzp.3">
    <property type="organism name" value="human"/>
</dbReference>
<dbReference type="AGR" id="HGNC:8057"/>
<dbReference type="CTD" id="26747"/>
<dbReference type="DisGeNET" id="26747"/>
<dbReference type="GeneCards" id="NUFIP1"/>
<dbReference type="HGNC" id="HGNC:8057">
    <property type="gene designation" value="NUFIP1"/>
</dbReference>
<dbReference type="HPA" id="ENSG00000083635">
    <property type="expression patterns" value="Low tissue specificity"/>
</dbReference>
<dbReference type="MIM" id="604354">
    <property type="type" value="gene"/>
</dbReference>
<dbReference type="neXtProt" id="NX_Q9UHK0"/>
<dbReference type="OpenTargets" id="ENSG00000083635"/>
<dbReference type="PharmGKB" id="PA31843"/>
<dbReference type="VEuPathDB" id="HostDB:ENSG00000083635"/>
<dbReference type="eggNOG" id="ENOG502QPTB">
    <property type="taxonomic scope" value="Eukaryota"/>
</dbReference>
<dbReference type="GeneTree" id="ENSGT00390000003758"/>
<dbReference type="HOGENOM" id="CLU_038059_0_0_1"/>
<dbReference type="InParanoid" id="Q9UHK0"/>
<dbReference type="OMA" id="WMFWAML"/>
<dbReference type="OrthoDB" id="273070at2759"/>
<dbReference type="PAN-GO" id="Q9UHK0">
    <property type="GO annotations" value="2 GO annotations based on evolutionary models"/>
</dbReference>
<dbReference type="PhylomeDB" id="Q9UHK0"/>
<dbReference type="TreeFam" id="TF329804"/>
<dbReference type="PathwayCommons" id="Q9UHK0"/>
<dbReference type="SignaLink" id="Q9UHK0"/>
<dbReference type="BioGRID-ORCS" id="26747">
    <property type="hits" value="357 hits in 1157 CRISPR screens"/>
</dbReference>
<dbReference type="ChiTaRS" id="NUFIP1">
    <property type="organism name" value="human"/>
</dbReference>
<dbReference type="GeneWiki" id="NUFIP1"/>
<dbReference type="GenomeRNAi" id="26747"/>
<dbReference type="Pharos" id="Q9UHK0">
    <property type="development level" value="Tbio"/>
</dbReference>
<dbReference type="PRO" id="PR:Q9UHK0"/>
<dbReference type="Proteomes" id="UP000005640">
    <property type="component" value="Chromosome 13"/>
</dbReference>
<dbReference type="RNAct" id="Q9UHK0">
    <property type="molecule type" value="protein"/>
</dbReference>
<dbReference type="Bgee" id="ENSG00000083635">
    <property type="expression patterns" value="Expressed in endothelial cell and 151 other cell types or tissues"/>
</dbReference>
<dbReference type="GO" id="GO:0001650">
    <property type="term" value="C:fibrillar center"/>
    <property type="evidence" value="ECO:0000314"/>
    <property type="project" value="HPA"/>
</dbReference>
<dbReference type="GO" id="GO:0016363">
    <property type="term" value="C:nuclear matrix"/>
    <property type="evidence" value="ECO:0000314"/>
    <property type="project" value="HGNC-UCL"/>
</dbReference>
<dbReference type="GO" id="GO:0005730">
    <property type="term" value="C:nucleolus"/>
    <property type="evidence" value="ECO:0000314"/>
    <property type="project" value="HGNC-UCL"/>
</dbReference>
<dbReference type="GO" id="GO:0005654">
    <property type="term" value="C:nucleoplasm"/>
    <property type="evidence" value="ECO:0000314"/>
    <property type="project" value="HPA"/>
</dbReference>
<dbReference type="GO" id="GO:0005634">
    <property type="term" value="C:nucleus"/>
    <property type="evidence" value="ECO:0000318"/>
    <property type="project" value="GO_Central"/>
</dbReference>
<dbReference type="GO" id="GO:0005726">
    <property type="term" value="C:perichromatin fibrils"/>
    <property type="evidence" value="ECO:0000314"/>
    <property type="project" value="HGNC-UCL"/>
</dbReference>
<dbReference type="GO" id="GO:0070761">
    <property type="term" value="C:pre-snoRNP complex"/>
    <property type="evidence" value="ECO:0000314"/>
    <property type="project" value="BHF-UCL"/>
</dbReference>
<dbReference type="GO" id="GO:0048786">
    <property type="term" value="C:presynaptic active zone"/>
    <property type="evidence" value="ECO:0000250"/>
    <property type="project" value="HGNC"/>
</dbReference>
<dbReference type="GO" id="GO:0032991">
    <property type="term" value="C:protein-containing complex"/>
    <property type="evidence" value="ECO:0000314"/>
    <property type="project" value="BHF-UCL"/>
</dbReference>
<dbReference type="GO" id="GO:0008023">
    <property type="term" value="C:transcription elongation factor complex"/>
    <property type="evidence" value="ECO:0000314"/>
    <property type="project" value="HGNC-UCL"/>
</dbReference>
<dbReference type="GO" id="GO:0051117">
    <property type="term" value="F:ATPase binding"/>
    <property type="evidence" value="ECO:0000353"/>
    <property type="project" value="UniProtKB"/>
</dbReference>
<dbReference type="GO" id="GO:0042802">
    <property type="term" value="F:identical protein binding"/>
    <property type="evidence" value="ECO:0000353"/>
    <property type="project" value="BHF-UCL"/>
</dbReference>
<dbReference type="GO" id="GO:0030674">
    <property type="term" value="F:protein-macromolecule adaptor activity"/>
    <property type="evidence" value="ECO:0000353"/>
    <property type="project" value="BHF-UCL"/>
</dbReference>
<dbReference type="GO" id="GO:0003723">
    <property type="term" value="F:RNA binding"/>
    <property type="evidence" value="ECO:0000314"/>
    <property type="project" value="HGNC-UCL"/>
</dbReference>
<dbReference type="GO" id="GO:0008270">
    <property type="term" value="F:zinc ion binding"/>
    <property type="evidence" value="ECO:0007669"/>
    <property type="project" value="UniProtKB-KW"/>
</dbReference>
<dbReference type="GO" id="GO:0000492">
    <property type="term" value="P:box C/D snoRNP assembly"/>
    <property type="evidence" value="ECO:0000315"/>
    <property type="project" value="BHF-UCL"/>
</dbReference>
<dbReference type="GO" id="GO:0045944">
    <property type="term" value="P:positive regulation of transcription by RNA polymerase II"/>
    <property type="evidence" value="ECO:0000315"/>
    <property type="project" value="HGNC-UCL"/>
</dbReference>
<dbReference type="GO" id="GO:0006396">
    <property type="term" value="P:RNA processing"/>
    <property type="evidence" value="ECO:0000304"/>
    <property type="project" value="ProtInc"/>
</dbReference>
<dbReference type="InterPro" id="IPR039136">
    <property type="entry name" value="NUFIP1-like"/>
</dbReference>
<dbReference type="InterPro" id="IPR019496">
    <property type="entry name" value="NUFIP1_cons_dom"/>
</dbReference>
<dbReference type="InterPro" id="IPR013087">
    <property type="entry name" value="Znf_C2H2_type"/>
</dbReference>
<dbReference type="PANTHER" id="PTHR13309:SF1">
    <property type="entry name" value="FMR1-INTERACTING PROTEIN NUFIP1"/>
    <property type="match status" value="1"/>
</dbReference>
<dbReference type="PANTHER" id="PTHR13309">
    <property type="entry name" value="NUCLEAR FRAGILE X MENTAL RETARDATION PROTEIN INTERACTING PROTEIN 1"/>
    <property type="match status" value="1"/>
</dbReference>
<dbReference type="Pfam" id="PF10453">
    <property type="entry name" value="NUFIP1"/>
    <property type="match status" value="1"/>
</dbReference>
<dbReference type="SMART" id="SM00355">
    <property type="entry name" value="ZnF_C2H2"/>
    <property type="match status" value="2"/>
</dbReference>
<dbReference type="PROSITE" id="PS00028">
    <property type="entry name" value="ZINC_FINGER_C2H2_1"/>
    <property type="match status" value="1"/>
</dbReference>
<dbReference type="PROSITE" id="PS50157">
    <property type="entry name" value="ZINC_FINGER_C2H2_2"/>
    <property type="match status" value="1"/>
</dbReference>
<protein>
    <recommendedName>
        <fullName evidence="7">FMR1-interacting protein NUFIP1</fullName>
    </recommendedName>
    <alternativeName>
        <fullName evidence="8">Nuclear FMR1-interacting protein 1</fullName>
    </alternativeName>
    <alternativeName>
        <fullName>Nuclear FMRP-interacting protein 1</fullName>
    </alternativeName>
</protein>
<accession>Q9UHK0</accession>
<accession>Q8WVM5</accession>
<accession>Q96SG1</accession>
<feature type="chain" id="PRO_0000245518" description="FMR1-interacting protein NUFIP1">
    <location>
        <begin position="1"/>
        <end position="495"/>
    </location>
</feature>
<feature type="zinc finger region" description="C2H2-type" evidence="1">
    <location>
        <begin position="174"/>
        <end position="196"/>
    </location>
</feature>
<feature type="region of interest" description="Disordered" evidence="2">
    <location>
        <begin position="1"/>
        <end position="108"/>
    </location>
</feature>
<feature type="region of interest" description="Disordered" evidence="2">
    <location>
        <begin position="277"/>
        <end position="357"/>
    </location>
</feature>
<feature type="region of interest" description="Disordered" evidence="2">
    <location>
        <begin position="413"/>
        <end position="435"/>
    </location>
</feature>
<feature type="short sequence motif" description="Bipartite nuclear localization signal">
    <location>
        <begin position="243"/>
        <end position="260"/>
    </location>
</feature>
<feature type="compositionally biased region" description="Polar residues" evidence="2">
    <location>
        <begin position="98"/>
        <end position="108"/>
    </location>
</feature>
<feature type="compositionally biased region" description="Basic and acidic residues" evidence="2">
    <location>
        <begin position="416"/>
        <end position="431"/>
    </location>
</feature>
<feature type="modified residue" description="Phosphoserine" evidence="9 10 11 12">
    <location>
        <position position="338"/>
    </location>
</feature>
<feature type="modified residue" description="Phosphoserine" evidence="9 10 11 12">
    <location>
        <position position="340"/>
    </location>
</feature>
<feature type="modified residue" description="Phosphoserine" evidence="9 10 11 12">
    <location>
        <position position="342"/>
    </location>
</feature>
<feature type="modified residue" description="Phosphoserine" evidence="13">
    <location>
        <position position="403"/>
    </location>
</feature>
<feature type="sequence variant" id="VAR_026978" description="In dbSNP:rs1140993." evidence="3">
    <original>S</original>
    <variation>R</variation>
    <location>
        <position position="36"/>
    </location>
</feature>
<feature type="helix" evidence="14">
    <location>
        <begin position="463"/>
        <end position="480"/>
    </location>
</feature>
<proteinExistence type="evidence at protein level"/>
<comment type="function">
    <text evidence="3">Binds RNA.</text>
</comment>
<comment type="subunit">
    <text evidence="3 4 5">Interacts with FMR1 (PubMed:10556305). Interacts with ZNHIT3 (PubMed:28335020). Interacts with NOP2, NOP56 and RUVBL1 (PubMed:36161484).</text>
</comment>
<comment type="interaction">
    <interactant intactId="EBI-2563549">
        <id>Q9UHK0</id>
    </interactant>
    <interactant intactId="EBI-395469">
        <id>Q9Y2X3</id>
        <label>NOP58</label>
    </interactant>
    <organismsDiffer>false</organismsDiffer>
    <experiments>3</experiments>
</comment>
<comment type="interaction">
    <interactant intactId="EBI-2563549">
        <id>Q9UHK0</id>
    </interactant>
    <interactant intactId="EBI-712228">
        <id>P55769</id>
        <label>SNU13</label>
    </interactant>
    <organismsDiffer>false</organismsDiffer>
    <experiments>2</experiments>
</comment>
<comment type="interaction">
    <interactant intactId="EBI-2563549">
        <id>Q9UHK0</id>
    </interactant>
    <interactant intactId="EBI-2563564">
        <id>Q15649</id>
        <label>ZNHIT3</label>
    </interactant>
    <organismsDiffer>false</organismsDiffer>
    <experiments>10</experiments>
</comment>
<comment type="interaction">
    <interactant intactId="EBI-2563549">
        <id>Q9UHK0</id>
    </interactant>
    <interactant intactId="EBI-2563515">
        <id>Q9NWK9</id>
        <label>ZNHIT6</label>
    </interactant>
    <organismsDiffer>false</organismsDiffer>
    <experiments>3</experiments>
</comment>
<comment type="interaction">
    <interactant intactId="EBI-2563549">
        <id>Q9UHK0</id>
    </interactant>
    <interactant intactId="EBI-1634999">
        <id>P60122</id>
        <label>Ruvbl1</label>
    </interactant>
    <organismsDiffer>true</organismsDiffer>
    <experiments>2</experiments>
</comment>
<comment type="subcellular location">
    <subcellularLocation>
        <location evidence="3">Nucleus</location>
    </subcellularLocation>
    <text>Distributed in the nucleus in a dot-like pattern.</text>
</comment>
<comment type="tissue specificity">
    <text evidence="3">Expressed in spleen, thymus, prostate, testis, ovary, small intestine, colon, peripheral blood leukocyte, heart, brain, placenta, lung, liver, skeletal muscle, kidney, and pancreas.</text>
</comment>
<comment type="sequence caution" evidence="6">
    <conflict type="erroneous initiation">
        <sequence resource="EMBL-CDS" id="AAH17745"/>
    </conflict>
</comment>
<evidence type="ECO:0000255" key="1">
    <source>
        <dbReference type="PROSITE-ProRule" id="PRU00042"/>
    </source>
</evidence>
<evidence type="ECO:0000256" key="2">
    <source>
        <dbReference type="SAM" id="MobiDB-lite"/>
    </source>
</evidence>
<evidence type="ECO:0000269" key="3">
    <source>
    </source>
</evidence>
<evidence type="ECO:0000269" key="4">
    <source>
    </source>
</evidence>
<evidence type="ECO:0000269" key="5">
    <source>
    </source>
</evidence>
<evidence type="ECO:0000305" key="6"/>
<evidence type="ECO:0000305" key="7">
    <source>
    </source>
</evidence>
<evidence type="ECO:0000312" key="8">
    <source>
        <dbReference type="HGNC" id="HGNC:8057"/>
    </source>
</evidence>
<evidence type="ECO:0007744" key="9">
    <source>
    </source>
</evidence>
<evidence type="ECO:0007744" key="10">
    <source>
    </source>
</evidence>
<evidence type="ECO:0007744" key="11">
    <source>
    </source>
</evidence>
<evidence type="ECO:0007744" key="12">
    <source>
    </source>
</evidence>
<evidence type="ECO:0007744" key="13">
    <source>
    </source>
</evidence>
<evidence type="ECO:0007829" key="14">
    <source>
        <dbReference type="PDB" id="5L85"/>
    </source>
</evidence>
<reference key="1">
    <citation type="journal article" date="1999" name="Hum. Mol. Genet.">
        <title>A novel RNA-binding nuclear protein that interacts with the fragile X mental retardation (FMR1) protein.</title>
        <authorList>
            <person name="Bardoni B."/>
            <person name="Schenck A."/>
            <person name="Mandel J.-L."/>
        </authorList>
    </citation>
    <scope>NUCLEOTIDE SEQUENCE [MRNA]</scope>
    <scope>VARIANT ARG-36</scope>
    <scope>FUNCTION</scope>
    <scope>SUBCELLULAR LOCATION</scope>
    <scope>TISSUE SPECIFICITY</scope>
    <scope>INTERACTION WITH FMR1</scope>
</reference>
<reference key="2">
    <citation type="journal article" date="2004" name="Nature">
        <title>The DNA sequence and analysis of human chromosome 13.</title>
        <authorList>
            <person name="Dunham A."/>
            <person name="Matthews L.H."/>
            <person name="Burton J."/>
            <person name="Ashurst J.L."/>
            <person name="Howe K.L."/>
            <person name="Ashcroft K.J."/>
            <person name="Beare D.M."/>
            <person name="Burford D.C."/>
            <person name="Hunt S.E."/>
            <person name="Griffiths-Jones S."/>
            <person name="Jones M.C."/>
            <person name="Keenan S.J."/>
            <person name="Oliver K."/>
            <person name="Scott C.E."/>
            <person name="Ainscough R."/>
            <person name="Almeida J.P."/>
            <person name="Ambrose K.D."/>
            <person name="Andrews D.T."/>
            <person name="Ashwell R.I.S."/>
            <person name="Babbage A.K."/>
            <person name="Bagguley C.L."/>
            <person name="Bailey J."/>
            <person name="Bannerjee R."/>
            <person name="Barlow K.F."/>
            <person name="Bates K."/>
            <person name="Beasley H."/>
            <person name="Bird C.P."/>
            <person name="Bray-Allen S."/>
            <person name="Brown A.J."/>
            <person name="Brown J.Y."/>
            <person name="Burrill W."/>
            <person name="Carder C."/>
            <person name="Carter N.P."/>
            <person name="Chapman J.C."/>
            <person name="Clamp M.E."/>
            <person name="Clark S.Y."/>
            <person name="Clarke G."/>
            <person name="Clee C.M."/>
            <person name="Clegg S.C."/>
            <person name="Cobley V."/>
            <person name="Collins J.E."/>
            <person name="Corby N."/>
            <person name="Coville G.J."/>
            <person name="Deloukas P."/>
            <person name="Dhami P."/>
            <person name="Dunham I."/>
            <person name="Dunn M."/>
            <person name="Earthrowl M.E."/>
            <person name="Ellington A.G."/>
            <person name="Faulkner L."/>
            <person name="Frankish A.G."/>
            <person name="Frankland J."/>
            <person name="French L."/>
            <person name="Garner P."/>
            <person name="Garnett J."/>
            <person name="Gilbert J.G.R."/>
            <person name="Gilson C.J."/>
            <person name="Ghori J."/>
            <person name="Grafham D.V."/>
            <person name="Gribble S.M."/>
            <person name="Griffiths C."/>
            <person name="Hall R.E."/>
            <person name="Hammond S."/>
            <person name="Harley J.L."/>
            <person name="Hart E.A."/>
            <person name="Heath P.D."/>
            <person name="Howden P.J."/>
            <person name="Huckle E.J."/>
            <person name="Hunt P.J."/>
            <person name="Hunt A.R."/>
            <person name="Johnson C."/>
            <person name="Johnson D."/>
            <person name="Kay M."/>
            <person name="Kimberley A.M."/>
            <person name="King A."/>
            <person name="Laird G.K."/>
            <person name="Langford C.J."/>
            <person name="Lawlor S."/>
            <person name="Leongamornlert D.A."/>
            <person name="Lloyd D.M."/>
            <person name="Lloyd C."/>
            <person name="Loveland J.E."/>
            <person name="Lovell J."/>
            <person name="Martin S."/>
            <person name="Mashreghi-Mohammadi M."/>
            <person name="McLaren S.J."/>
            <person name="McMurray A."/>
            <person name="Milne S."/>
            <person name="Moore M.J.F."/>
            <person name="Nickerson T."/>
            <person name="Palmer S.A."/>
            <person name="Pearce A.V."/>
            <person name="Peck A.I."/>
            <person name="Pelan S."/>
            <person name="Phillimore B."/>
            <person name="Porter K.M."/>
            <person name="Rice C.M."/>
            <person name="Searle S."/>
            <person name="Sehra H.K."/>
            <person name="Shownkeen R."/>
            <person name="Skuce C.D."/>
            <person name="Smith M."/>
            <person name="Steward C.A."/>
            <person name="Sycamore N."/>
            <person name="Tester J."/>
            <person name="Thomas D.W."/>
            <person name="Tracey A."/>
            <person name="Tromans A."/>
            <person name="Tubby B."/>
            <person name="Wall M."/>
            <person name="Wallis J.M."/>
            <person name="West A.P."/>
            <person name="Whitehead S.L."/>
            <person name="Willey D.L."/>
            <person name="Wilming L."/>
            <person name="Wray P.W."/>
            <person name="Wright M.W."/>
            <person name="Young L."/>
            <person name="Coulson A."/>
            <person name="Durbin R.M."/>
            <person name="Hubbard T."/>
            <person name="Sulston J.E."/>
            <person name="Beck S."/>
            <person name="Bentley D.R."/>
            <person name="Rogers J."/>
            <person name="Ross M.T."/>
        </authorList>
    </citation>
    <scope>NUCLEOTIDE SEQUENCE [LARGE SCALE GENOMIC DNA]</scope>
</reference>
<reference key="3">
    <citation type="journal article" date="2004" name="Genome Res.">
        <title>The status, quality, and expansion of the NIH full-length cDNA project: the Mammalian Gene Collection (MGC).</title>
        <authorList>
            <consortium name="The MGC Project Team"/>
        </authorList>
    </citation>
    <scope>NUCLEOTIDE SEQUENCE [LARGE SCALE MRNA] OF 163-495</scope>
    <source>
        <tissue>Duodenum</tissue>
    </source>
</reference>
<reference key="4">
    <citation type="journal article" date="2006" name="Cell">
        <title>Global, in vivo, and site-specific phosphorylation dynamics in signaling networks.</title>
        <authorList>
            <person name="Olsen J.V."/>
            <person name="Blagoev B."/>
            <person name="Gnad F."/>
            <person name="Macek B."/>
            <person name="Kumar C."/>
            <person name="Mortensen P."/>
            <person name="Mann M."/>
        </authorList>
    </citation>
    <scope>PHOSPHORYLATION [LARGE SCALE ANALYSIS] AT SER-338; SER-340 AND SER-342</scope>
    <scope>IDENTIFICATION BY MASS SPECTROMETRY [LARGE SCALE ANALYSIS]</scope>
    <source>
        <tissue>Cervix carcinoma</tissue>
    </source>
</reference>
<reference key="5">
    <citation type="journal article" date="2008" name="Proc. Natl. Acad. Sci. U.S.A.">
        <title>A quantitative atlas of mitotic phosphorylation.</title>
        <authorList>
            <person name="Dephoure N."/>
            <person name="Zhou C."/>
            <person name="Villen J."/>
            <person name="Beausoleil S.A."/>
            <person name="Bakalarski C.E."/>
            <person name="Elledge S.J."/>
            <person name="Gygi S.P."/>
        </authorList>
    </citation>
    <scope>PHOSPHORYLATION [LARGE SCALE ANALYSIS] AT SER-338; SER-340 AND SER-342</scope>
    <scope>IDENTIFICATION BY MASS SPECTROMETRY [LARGE SCALE ANALYSIS]</scope>
    <source>
        <tissue>Cervix carcinoma</tissue>
    </source>
</reference>
<reference key="6">
    <citation type="journal article" date="2010" name="Sci. Signal.">
        <title>Quantitative phosphoproteomics reveals widespread full phosphorylation site occupancy during mitosis.</title>
        <authorList>
            <person name="Olsen J.V."/>
            <person name="Vermeulen M."/>
            <person name="Santamaria A."/>
            <person name="Kumar C."/>
            <person name="Miller M.L."/>
            <person name="Jensen L.J."/>
            <person name="Gnad F."/>
            <person name="Cox J."/>
            <person name="Jensen T.S."/>
            <person name="Nigg E.A."/>
            <person name="Brunak S."/>
            <person name="Mann M."/>
        </authorList>
    </citation>
    <scope>PHOSPHORYLATION [LARGE SCALE ANALYSIS] AT SER-338; SER-340 AND SER-342</scope>
    <scope>IDENTIFICATION BY MASS SPECTROMETRY [LARGE SCALE ANALYSIS]</scope>
    <source>
        <tissue>Cervix carcinoma</tissue>
    </source>
</reference>
<reference key="7">
    <citation type="journal article" date="2011" name="Sci. Signal.">
        <title>System-wide temporal characterization of the proteome and phosphoproteome of human embryonic stem cell differentiation.</title>
        <authorList>
            <person name="Rigbolt K.T."/>
            <person name="Prokhorova T.A."/>
            <person name="Akimov V."/>
            <person name="Henningsen J."/>
            <person name="Johansen P.T."/>
            <person name="Kratchmarova I."/>
            <person name="Kassem M."/>
            <person name="Mann M."/>
            <person name="Olsen J.V."/>
            <person name="Blagoev B."/>
        </authorList>
    </citation>
    <scope>PHOSPHORYLATION [LARGE SCALE ANALYSIS] AT SER-338; SER-340 AND SER-342</scope>
    <scope>IDENTIFICATION BY MASS SPECTROMETRY [LARGE SCALE ANALYSIS]</scope>
</reference>
<reference key="8">
    <citation type="journal article" date="2013" name="J. Proteome Res.">
        <title>Toward a comprehensive characterization of a human cancer cell phosphoproteome.</title>
        <authorList>
            <person name="Zhou H."/>
            <person name="Di Palma S."/>
            <person name="Preisinger C."/>
            <person name="Peng M."/>
            <person name="Polat A.N."/>
            <person name="Heck A.J."/>
            <person name="Mohammed S."/>
        </authorList>
    </citation>
    <scope>IDENTIFICATION BY MASS SPECTROMETRY [LARGE SCALE ANALYSIS]</scope>
    <source>
        <tissue>Cervix carcinoma</tissue>
        <tissue>Erythroleukemia</tissue>
    </source>
</reference>
<reference key="9">
    <citation type="journal article" date="2014" name="J. Proteomics">
        <title>An enzyme assisted RP-RPLC approach for in-depth analysis of human liver phosphoproteome.</title>
        <authorList>
            <person name="Bian Y."/>
            <person name="Song C."/>
            <person name="Cheng K."/>
            <person name="Dong M."/>
            <person name="Wang F."/>
            <person name="Huang J."/>
            <person name="Sun D."/>
            <person name="Wang L."/>
            <person name="Ye M."/>
            <person name="Zou H."/>
        </authorList>
    </citation>
    <scope>PHOSPHORYLATION [LARGE SCALE ANALYSIS] AT SER-403</scope>
    <scope>IDENTIFICATION BY MASS SPECTROMETRY [LARGE SCALE ANALYSIS]</scope>
    <source>
        <tissue>Liver</tissue>
    </source>
</reference>
<reference key="10">
    <citation type="journal article" date="2017" name="Brain">
        <title>ZNHIT3 is defective in PEHO syndrome, a severe encephalopathy with cerebellar granule neuron loss.</title>
        <authorList>
            <person name="Anttonen A.K."/>
            <person name="Laari A."/>
            <person name="Kousi M."/>
            <person name="Yang Y.J."/>
            <person name="Jaeaeskelaeinen T."/>
            <person name="Somer M."/>
            <person name="Siintola E."/>
            <person name="Jakkula E."/>
            <person name="Muona M."/>
            <person name="Tegelberg S."/>
            <person name="Loennqvist T."/>
            <person name="Pihko H."/>
            <person name="Valanne L."/>
            <person name="Paetau A."/>
            <person name="Lun M.P."/>
            <person name="Haestbacka J."/>
            <person name="Kopra O."/>
            <person name="Joensuu T."/>
            <person name="Katsanis N."/>
            <person name="Lehtinen M.K."/>
            <person name="Palvimo J.J."/>
            <person name="Lehesjoki A.E."/>
        </authorList>
    </citation>
    <scope>INTERACTION WITH ZNHIT3</scope>
</reference>
<reference key="11">
    <citation type="journal article" date="2022" name="Nucleic Acids Res.">
        <title>Human NOP2/NSUN1 regulates ribosome biogenesis through non-catalytic complex formation with box C/D snoRNPs.</title>
        <authorList>
            <person name="Liao H."/>
            <person name="Gaur A."/>
            <person name="McConie H."/>
            <person name="Shekar A."/>
            <person name="Wang K."/>
            <person name="Chang J.T."/>
            <person name="Breton G."/>
            <person name="Denicourt C."/>
        </authorList>
    </citation>
    <scope>INTERACTION WITH NOP2; NOP56 AND RUVBL1</scope>
</reference>
<keyword id="KW-0002">3D-structure</keyword>
<keyword id="KW-0479">Metal-binding</keyword>
<keyword id="KW-0539">Nucleus</keyword>
<keyword id="KW-0597">Phosphoprotein</keyword>
<keyword id="KW-1267">Proteomics identification</keyword>
<keyword id="KW-1185">Reference proteome</keyword>
<keyword id="KW-0694">RNA-binding</keyword>
<keyword id="KW-0862">Zinc</keyword>
<keyword id="KW-0863">Zinc-finger</keyword>
<gene>
    <name evidence="8" type="primary">NUFIP1</name>
</gene>
<name>NUFP1_HUMAN</name>